<name>K2C73_MOUSE</name>
<organism>
    <name type="scientific">Mus musculus</name>
    <name type="common">Mouse</name>
    <dbReference type="NCBI Taxonomy" id="10090"/>
    <lineage>
        <taxon>Eukaryota</taxon>
        <taxon>Metazoa</taxon>
        <taxon>Chordata</taxon>
        <taxon>Craniata</taxon>
        <taxon>Vertebrata</taxon>
        <taxon>Euteleostomi</taxon>
        <taxon>Mammalia</taxon>
        <taxon>Eutheria</taxon>
        <taxon>Euarchontoglires</taxon>
        <taxon>Glires</taxon>
        <taxon>Rodentia</taxon>
        <taxon>Myomorpha</taxon>
        <taxon>Muroidea</taxon>
        <taxon>Muridae</taxon>
        <taxon>Murinae</taxon>
        <taxon>Mus</taxon>
        <taxon>Mus</taxon>
    </lineage>
</organism>
<reference key="1">
    <citation type="journal article" date="2004" name="Genome Res.">
        <title>The status, quality, and expansion of the NIH full-length cDNA project: the Mammalian Gene Collection (MGC).</title>
        <authorList>
            <consortium name="The MGC Project Team"/>
        </authorList>
    </citation>
    <scope>NUCLEOTIDE SEQUENCE [LARGE SCALE MRNA]</scope>
    <source>
        <strain>C57BL/6J</strain>
        <tissue>Eye</tissue>
    </source>
</reference>
<reference key="2">
    <citation type="submission" date="2009-01" db="UniProtKB">
        <authorList>
            <person name="Lubec G."/>
            <person name="Sunyer B."/>
            <person name="Chen W.-Q."/>
        </authorList>
    </citation>
    <scope>PROTEIN SEQUENCE OF 151-162; 295-306 AND 424-434</scope>
    <scope>IDENTIFICATION BY MASS SPECTROMETRY</scope>
    <source>
        <strain>OF1</strain>
        <tissue>Hippocampus</tissue>
    </source>
</reference>
<reference key="3">
    <citation type="journal article" date="2004" name="Eur. J. Cell Biol.">
        <title>Comprehensive analysis of keratin gene clusters in humans and rodents.</title>
        <authorList>
            <person name="Hesse M."/>
            <person name="Zimek A."/>
            <person name="Weber K."/>
            <person name="Magin T.M."/>
        </authorList>
    </citation>
    <scope>IDENTIFICATION</scope>
</reference>
<reference key="4">
    <citation type="journal article" date="2010" name="Cell">
        <title>A tissue-specific atlas of mouse protein phosphorylation and expression.</title>
        <authorList>
            <person name="Huttlin E.L."/>
            <person name="Jedrychowski M.P."/>
            <person name="Elias J.E."/>
            <person name="Goswami T."/>
            <person name="Rad R."/>
            <person name="Beausoleil S.A."/>
            <person name="Villen J."/>
            <person name="Haas W."/>
            <person name="Sowa M.E."/>
            <person name="Gygi S.P."/>
        </authorList>
    </citation>
    <scope>IDENTIFICATION BY MASS SPECTROMETRY [LARGE SCALE ANALYSIS]</scope>
    <source>
        <tissue>Heart</tissue>
    </source>
</reference>
<dbReference type="EMBL" id="BC067067">
    <property type="protein sequence ID" value="AAH67067.1"/>
    <property type="molecule type" value="mRNA"/>
</dbReference>
<dbReference type="EMBL" id="BK003988">
    <property type="protein sequence ID" value="DAA02233.1"/>
    <property type="molecule type" value="mRNA"/>
</dbReference>
<dbReference type="CCDS" id="CCDS27864.1"/>
<dbReference type="RefSeq" id="NP_997650.1">
    <property type="nucleotide sequence ID" value="NM_212485.3"/>
</dbReference>
<dbReference type="SMR" id="Q6NXH9"/>
<dbReference type="BioGRID" id="230210">
    <property type="interactions" value="14"/>
</dbReference>
<dbReference type="FunCoup" id="Q6NXH9">
    <property type="interactions" value="37"/>
</dbReference>
<dbReference type="IntAct" id="Q6NXH9">
    <property type="interactions" value="2"/>
</dbReference>
<dbReference type="MINT" id="Q6NXH9"/>
<dbReference type="STRING" id="10090.ENSMUSP00000065349"/>
<dbReference type="GlyGen" id="Q6NXH9">
    <property type="glycosylation" value="1 site, 1 O-linked glycan (1 site)"/>
</dbReference>
<dbReference type="iPTMnet" id="Q6NXH9"/>
<dbReference type="PhosphoSitePlus" id="Q6NXH9"/>
<dbReference type="jPOST" id="Q6NXH9"/>
<dbReference type="PaxDb" id="10090-ENSMUSP00000065349"/>
<dbReference type="PeptideAtlas" id="Q6NXH9"/>
<dbReference type="ProteomicsDB" id="269445"/>
<dbReference type="Antibodypedia" id="51267">
    <property type="antibodies" value="104 antibodies from 17 providers"/>
</dbReference>
<dbReference type="DNASU" id="223915"/>
<dbReference type="Ensembl" id="ENSMUST00000063292.8">
    <property type="protein sequence ID" value="ENSMUSP00000065349.7"/>
    <property type="gene ID" value="ENSMUSG00000063661.7"/>
</dbReference>
<dbReference type="GeneID" id="223915"/>
<dbReference type="KEGG" id="mmu:223915"/>
<dbReference type="UCSC" id="uc007xua.1">
    <property type="organism name" value="mouse"/>
</dbReference>
<dbReference type="AGR" id="MGI:3607712"/>
<dbReference type="CTD" id="319101"/>
<dbReference type="MGI" id="MGI:3607712">
    <property type="gene designation" value="Krt73"/>
</dbReference>
<dbReference type="VEuPathDB" id="HostDB:ENSMUSG00000063661"/>
<dbReference type="eggNOG" id="ENOG502SK67">
    <property type="taxonomic scope" value="Eukaryota"/>
</dbReference>
<dbReference type="GeneTree" id="ENSGT00940000161853"/>
<dbReference type="HOGENOM" id="CLU_012560_6_1_1"/>
<dbReference type="InParanoid" id="Q6NXH9"/>
<dbReference type="OMA" id="ARMMCEY"/>
<dbReference type="OrthoDB" id="2441647at2759"/>
<dbReference type="PhylomeDB" id="Q6NXH9"/>
<dbReference type="TreeFam" id="TF317854"/>
<dbReference type="Reactome" id="R-MMU-6805567">
    <property type="pathway name" value="Keratinization"/>
</dbReference>
<dbReference type="Reactome" id="R-MMU-6809371">
    <property type="pathway name" value="Formation of the cornified envelope"/>
</dbReference>
<dbReference type="BioGRID-ORCS" id="223915">
    <property type="hits" value="3 hits in 77 CRISPR screens"/>
</dbReference>
<dbReference type="ChiTaRS" id="Krt73">
    <property type="organism name" value="mouse"/>
</dbReference>
<dbReference type="PRO" id="PR:Q6NXH9"/>
<dbReference type="Proteomes" id="UP000000589">
    <property type="component" value="Chromosome 15"/>
</dbReference>
<dbReference type="RNAct" id="Q6NXH9">
    <property type="molecule type" value="protein"/>
</dbReference>
<dbReference type="Bgee" id="ENSMUSG00000063661">
    <property type="expression patterns" value="Expressed in hair follicle and 31 other cell types or tissues"/>
</dbReference>
<dbReference type="GO" id="GO:0045095">
    <property type="term" value="C:keratin filament"/>
    <property type="evidence" value="ECO:0007669"/>
    <property type="project" value="InterPro"/>
</dbReference>
<dbReference type="FunFam" id="1.20.5.1160:FF:000001">
    <property type="entry name" value="Keratin type II"/>
    <property type="match status" value="1"/>
</dbReference>
<dbReference type="FunFam" id="1.20.5.170:FF:000004">
    <property type="entry name" value="Keratin, type II cytoskeletal 5"/>
    <property type="match status" value="1"/>
</dbReference>
<dbReference type="FunFam" id="1.20.5.500:FF:000001">
    <property type="entry name" value="Type II keratin 23"/>
    <property type="match status" value="1"/>
</dbReference>
<dbReference type="Gene3D" id="1.20.5.170">
    <property type="match status" value="1"/>
</dbReference>
<dbReference type="Gene3D" id="1.20.5.500">
    <property type="entry name" value="Single helix bin"/>
    <property type="match status" value="1"/>
</dbReference>
<dbReference type="Gene3D" id="1.20.5.1160">
    <property type="entry name" value="Vasodilator-stimulated phosphoprotein"/>
    <property type="match status" value="1"/>
</dbReference>
<dbReference type="InterPro" id="IPR018039">
    <property type="entry name" value="IF_conserved"/>
</dbReference>
<dbReference type="InterPro" id="IPR039008">
    <property type="entry name" value="IF_rod_dom"/>
</dbReference>
<dbReference type="InterPro" id="IPR032444">
    <property type="entry name" value="Keratin_2_head"/>
</dbReference>
<dbReference type="InterPro" id="IPR003054">
    <property type="entry name" value="Keratin_II"/>
</dbReference>
<dbReference type="PANTHER" id="PTHR45616">
    <property type="entry name" value="GATA-TYPE DOMAIN-CONTAINING PROTEIN"/>
    <property type="match status" value="1"/>
</dbReference>
<dbReference type="PANTHER" id="PTHR45616:SF31">
    <property type="entry name" value="KERATIN, TYPE II CYTOSKELETAL 73"/>
    <property type="match status" value="1"/>
</dbReference>
<dbReference type="Pfam" id="PF00038">
    <property type="entry name" value="Filament"/>
    <property type="match status" value="1"/>
</dbReference>
<dbReference type="Pfam" id="PF16208">
    <property type="entry name" value="Keratin_2_head"/>
    <property type="match status" value="1"/>
</dbReference>
<dbReference type="PRINTS" id="PR01276">
    <property type="entry name" value="TYPE2KERATIN"/>
</dbReference>
<dbReference type="SMART" id="SM01391">
    <property type="entry name" value="Filament"/>
    <property type="match status" value="1"/>
</dbReference>
<dbReference type="SUPFAM" id="SSF64593">
    <property type="entry name" value="Intermediate filament protein, coiled coil region"/>
    <property type="match status" value="3"/>
</dbReference>
<dbReference type="PROSITE" id="PS00226">
    <property type="entry name" value="IF_ROD_1"/>
    <property type="match status" value="1"/>
</dbReference>
<dbReference type="PROSITE" id="PS51842">
    <property type="entry name" value="IF_ROD_2"/>
    <property type="match status" value="1"/>
</dbReference>
<accession>Q6NXH9</accession>
<sequence>MNRQFTCKPGVANRGFSGCSAVLSGGSSSSYRAAGKGLSGGFSSRSLYSLRSPRSISFNVASSSGRTGGYGFGRNRASGFAGSMFGSGALGPSNPSLCLPGGIHQVTVNKSLLAPLNVELDPEIQKVRAQEREQIKALNNKFASFIDKVRFLEQQNQVLQTKWELLQQLDLSNCRRNLEPVYEAHISSLQKQLDSLSGDRVRLDSELRGMRDAVEDCKKRYEEEINKRTTAENEFVVLKKDVDAAYMSKVELQAKVDALDGEIKFLKCLYEGEITQMQSHISDTSVVLSMDNNRNLDLDSIIAEVRAQYEDIALKSKAEAEMVYQTKFQELQLAAGRHGDDLKHTRNEISELTRLIQRLRSEIESVKKQCSNLETAIADAEQRGDCALKDARAKLDELERALHQAKEELARMLREHQELMSMKLALDIEIATYRKLLEGEECRMSGEHTSAVSISVISSSAPGTVGAGTSFGFSSAGTYGYRQSSVAGGYGILSGGCVTGSGNCSPRGDTKNRLGSASEFKEVSGKTLALGSPSKKTMR</sequence>
<proteinExistence type="evidence at protein level"/>
<protein>
    <recommendedName>
        <fullName>Keratin, type II cytoskeletal 73</fullName>
    </recommendedName>
    <alternativeName>
        <fullName>Cytokeratin-73</fullName>
        <shortName>CK-73</shortName>
    </alternativeName>
    <alternativeName>
        <fullName>Keratin-73</fullName>
        <shortName>K73</shortName>
    </alternativeName>
    <alternativeName>
        <fullName>Type II inner root sheath-specific keratin-K6irs3</fullName>
    </alternativeName>
    <alternativeName>
        <fullName>Type-II keratin Kb36</fullName>
    </alternativeName>
</protein>
<keyword id="KW-0175">Coiled coil</keyword>
<keyword id="KW-0903">Direct protein sequencing</keyword>
<keyword id="KW-0403">Intermediate filament</keyword>
<keyword id="KW-0416">Keratin</keyword>
<keyword id="KW-1185">Reference proteome</keyword>
<evidence type="ECO:0000250" key="1"/>
<evidence type="ECO:0000255" key="2">
    <source>
        <dbReference type="PROSITE-ProRule" id="PRU01188"/>
    </source>
</evidence>
<comment type="function">
    <text evidence="1">Has a role in hair formation. Specific component of keratin intermediate filaments in the inner root sheath (IRS) of the hair follicle (By similarity).</text>
</comment>
<comment type="subunit">
    <text>Heterotetramer of two type I and two type II keratins.</text>
</comment>
<comment type="miscellaneous">
    <text>There are two types of cytoskeletal and microfibrillar keratin, I (acidic) and II (neutral to basic) (40-55 and 56-70 kDa, respectively).</text>
</comment>
<comment type="similarity">
    <text evidence="2">Belongs to the intermediate filament family.</text>
</comment>
<gene>
    <name type="primary">Krt73</name>
    <name type="synonym">Kb36</name>
</gene>
<feature type="chain" id="PRO_0000314882" description="Keratin, type II cytoskeletal 73">
    <location>
        <begin position="1"/>
        <end position="539"/>
    </location>
</feature>
<feature type="domain" description="IF rod" evidence="2">
    <location>
        <begin position="131"/>
        <end position="444"/>
    </location>
</feature>
<feature type="region of interest" description="Head">
    <location>
        <begin position="1"/>
        <end position="130"/>
    </location>
</feature>
<feature type="region of interest" description="Coil 1A">
    <location>
        <begin position="131"/>
        <end position="166"/>
    </location>
</feature>
<feature type="region of interest" description="Linker 1">
    <location>
        <begin position="167"/>
        <end position="185"/>
    </location>
</feature>
<feature type="region of interest" description="Coil 1B">
    <location>
        <begin position="186"/>
        <end position="277"/>
    </location>
</feature>
<feature type="region of interest" description="Linker 12">
    <location>
        <begin position="278"/>
        <end position="301"/>
    </location>
</feature>
<feature type="region of interest" description="Coil 2">
    <location>
        <begin position="302"/>
        <end position="440"/>
    </location>
</feature>
<feature type="region of interest" description="Tail">
    <location>
        <begin position="441"/>
        <end position="539"/>
    </location>
</feature>
<feature type="site" description="Stutter">
    <location>
        <position position="382"/>
    </location>
</feature>